<organism>
    <name type="scientific">Mycobacterium ulcerans (strain Agy99)</name>
    <dbReference type="NCBI Taxonomy" id="362242"/>
    <lineage>
        <taxon>Bacteria</taxon>
        <taxon>Bacillati</taxon>
        <taxon>Actinomycetota</taxon>
        <taxon>Actinomycetes</taxon>
        <taxon>Mycobacteriales</taxon>
        <taxon>Mycobacteriaceae</taxon>
        <taxon>Mycobacterium</taxon>
        <taxon>Mycobacterium ulcerans group</taxon>
    </lineage>
</organism>
<comment type="function">
    <text evidence="1">Catalyzes the oxidation of 3-carboxy-2-hydroxy-4-methylpentanoate (3-isopropylmalate) to 3-carboxy-4-methyl-2-oxopentanoate. The product decarboxylates to 4-methyl-2 oxopentanoate.</text>
</comment>
<comment type="catalytic activity">
    <reaction evidence="1">
        <text>(2R,3S)-3-isopropylmalate + NAD(+) = 4-methyl-2-oxopentanoate + CO2 + NADH</text>
        <dbReference type="Rhea" id="RHEA:32271"/>
        <dbReference type="ChEBI" id="CHEBI:16526"/>
        <dbReference type="ChEBI" id="CHEBI:17865"/>
        <dbReference type="ChEBI" id="CHEBI:35121"/>
        <dbReference type="ChEBI" id="CHEBI:57540"/>
        <dbReference type="ChEBI" id="CHEBI:57945"/>
        <dbReference type="EC" id="1.1.1.85"/>
    </reaction>
</comment>
<comment type="cofactor">
    <cofactor evidence="1">
        <name>Mg(2+)</name>
        <dbReference type="ChEBI" id="CHEBI:18420"/>
    </cofactor>
    <cofactor evidence="1">
        <name>Mn(2+)</name>
        <dbReference type="ChEBI" id="CHEBI:29035"/>
    </cofactor>
    <text evidence="1">Binds 1 Mg(2+) or Mn(2+) ion per subunit.</text>
</comment>
<comment type="pathway">
    <text evidence="1">Amino-acid biosynthesis; L-leucine biosynthesis; L-leucine from 3-methyl-2-oxobutanoate: step 3/4.</text>
</comment>
<comment type="subunit">
    <text evidence="1">Homodimer.</text>
</comment>
<comment type="subcellular location">
    <subcellularLocation>
        <location evidence="1">Cytoplasm</location>
    </subcellularLocation>
</comment>
<comment type="similarity">
    <text evidence="1">Belongs to the isocitrate and isopropylmalate dehydrogenases family. LeuB type 2 subfamily.</text>
</comment>
<gene>
    <name evidence="1" type="primary">leuB</name>
    <name type="ordered locus">MUL_1953</name>
</gene>
<feature type="chain" id="PRO_1000063877" description="3-isopropylmalate dehydrogenase">
    <location>
        <begin position="1"/>
        <end position="339"/>
    </location>
</feature>
<feature type="binding site" evidence="1">
    <location>
        <position position="87"/>
    </location>
    <ligand>
        <name>substrate</name>
    </ligand>
</feature>
<feature type="binding site" evidence="1">
    <location>
        <position position="97"/>
    </location>
    <ligand>
        <name>substrate</name>
    </ligand>
</feature>
<feature type="binding site" evidence="1">
    <location>
        <position position="124"/>
    </location>
    <ligand>
        <name>substrate</name>
    </ligand>
</feature>
<feature type="binding site" evidence="1">
    <location>
        <position position="214"/>
    </location>
    <ligand>
        <name>Mg(2+)</name>
        <dbReference type="ChEBI" id="CHEBI:18420"/>
    </ligand>
</feature>
<feature type="binding site" evidence="1">
    <location>
        <position position="214"/>
    </location>
    <ligand>
        <name>substrate</name>
    </ligand>
</feature>
<feature type="binding site" evidence="1">
    <location>
        <position position="238"/>
    </location>
    <ligand>
        <name>Mg(2+)</name>
        <dbReference type="ChEBI" id="CHEBI:18420"/>
    </ligand>
</feature>
<feature type="binding site" evidence="1">
    <location>
        <position position="242"/>
    </location>
    <ligand>
        <name>Mg(2+)</name>
        <dbReference type="ChEBI" id="CHEBI:18420"/>
    </ligand>
</feature>
<feature type="binding site" evidence="1">
    <location>
        <begin position="274"/>
        <end position="286"/>
    </location>
    <ligand>
        <name>NAD(+)</name>
        <dbReference type="ChEBI" id="CHEBI:57540"/>
    </ligand>
</feature>
<feature type="site" description="Important for catalysis" evidence="1">
    <location>
        <position position="131"/>
    </location>
</feature>
<feature type="site" description="Important for catalysis" evidence="1">
    <location>
        <position position="181"/>
    </location>
</feature>
<proteinExistence type="inferred from homology"/>
<name>LEU3_MYCUA</name>
<sequence>MKLAIVAGDGIGPEVVAQAVKILDVVQPGVEKTNYDLGARRFHATGEILPDSVIAELREHDAILLGAIGDPSVPSGVLERGLLLRLRFELDYHINLRPGRLYPGVKSPLALEPGNPEIDFVVVREGTEGPYTGNGGAIRVGTANEVATEVSVNTAFGVRRVVRDAFERAMRRRKHLTLVHKNNVLTFAGSLWWRTVQEIGEEYPDVELAYQHVDAATIHMVTDPGRFDVIVTDNLFGDIITDLAAAVCGGIGLAASGNIDATRTNPSMFEPVHGSAPDIAGQGIADPTAAIMSVSLLLAHLGLDDTASRVDRAVEGYLATRGNERLATAAVGERIAAAL</sequence>
<keyword id="KW-0028">Amino-acid biosynthesis</keyword>
<keyword id="KW-0100">Branched-chain amino acid biosynthesis</keyword>
<keyword id="KW-0963">Cytoplasm</keyword>
<keyword id="KW-0432">Leucine biosynthesis</keyword>
<keyword id="KW-0460">Magnesium</keyword>
<keyword id="KW-0464">Manganese</keyword>
<keyword id="KW-0479">Metal-binding</keyword>
<keyword id="KW-0520">NAD</keyword>
<keyword id="KW-0560">Oxidoreductase</keyword>
<protein>
    <recommendedName>
        <fullName evidence="1">3-isopropylmalate dehydrogenase</fullName>
        <ecNumber evidence="1">1.1.1.85</ecNumber>
    </recommendedName>
    <alternativeName>
        <fullName evidence="1">3-IPM-DH</fullName>
    </alternativeName>
    <alternativeName>
        <fullName evidence="1">Beta-IPM dehydrogenase</fullName>
        <shortName evidence="1">IMDH</shortName>
    </alternativeName>
</protein>
<accession>A0PPY6</accession>
<reference key="1">
    <citation type="journal article" date="2007" name="Genome Res.">
        <title>Reductive evolution and niche adaptation inferred from the genome of Mycobacterium ulcerans, the causative agent of Buruli ulcer.</title>
        <authorList>
            <person name="Stinear T.P."/>
            <person name="Seemann T."/>
            <person name="Pidot S."/>
            <person name="Frigui W."/>
            <person name="Reysset G."/>
            <person name="Garnier T."/>
            <person name="Meurice G."/>
            <person name="Simon D."/>
            <person name="Bouchier C."/>
            <person name="Ma L."/>
            <person name="Tichit M."/>
            <person name="Porter J.L."/>
            <person name="Ryan J."/>
            <person name="Johnson P.D.R."/>
            <person name="Davies J.K."/>
            <person name="Jenkin G.A."/>
            <person name="Small P.L.C."/>
            <person name="Jones L.M."/>
            <person name="Tekaia F."/>
            <person name="Laval F."/>
            <person name="Daffe M."/>
            <person name="Parkhill J."/>
            <person name="Cole S.T."/>
        </authorList>
    </citation>
    <scope>NUCLEOTIDE SEQUENCE [LARGE SCALE GENOMIC DNA]</scope>
    <source>
        <strain>Agy99</strain>
    </source>
</reference>
<dbReference type="EC" id="1.1.1.85" evidence="1"/>
<dbReference type="EMBL" id="CP000325">
    <property type="protein sequence ID" value="ABL04405.1"/>
    <property type="molecule type" value="Genomic_DNA"/>
</dbReference>
<dbReference type="RefSeq" id="WP_011740024.1">
    <property type="nucleotide sequence ID" value="NC_008611.1"/>
</dbReference>
<dbReference type="SMR" id="A0PPY6"/>
<dbReference type="KEGG" id="mul:MUL_1953"/>
<dbReference type="eggNOG" id="COG0473">
    <property type="taxonomic scope" value="Bacteria"/>
</dbReference>
<dbReference type="HOGENOM" id="CLU_031953_0_1_11"/>
<dbReference type="UniPathway" id="UPA00048">
    <property type="reaction ID" value="UER00072"/>
</dbReference>
<dbReference type="Proteomes" id="UP000000765">
    <property type="component" value="Chromosome"/>
</dbReference>
<dbReference type="GO" id="GO:0005737">
    <property type="term" value="C:cytoplasm"/>
    <property type="evidence" value="ECO:0007669"/>
    <property type="project" value="UniProtKB-SubCell"/>
</dbReference>
<dbReference type="GO" id="GO:0003862">
    <property type="term" value="F:3-isopropylmalate dehydrogenase activity"/>
    <property type="evidence" value="ECO:0007669"/>
    <property type="project" value="UniProtKB-UniRule"/>
</dbReference>
<dbReference type="GO" id="GO:0000287">
    <property type="term" value="F:magnesium ion binding"/>
    <property type="evidence" value="ECO:0007669"/>
    <property type="project" value="InterPro"/>
</dbReference>
<dbReference type="GO" id="GO:0051287">
    <property type="term" value="F:NAD binding"/>
    <property type="evidence" value="ECO:0007669"/>
    <property type="project" value="InterPro"/>
</dbReference>
<dbReference type="GO" id="GO:0009098">
    <property type="term" value="P:L-leucine biosynthetic process"/>
    <property type="evidence" value="ECO:0007669"/>
    <property type="project" value="UniProtKB-UniRule"/>
</dbReference>
<dbReference type="Gene3D" id="3.40.718.10">
    <property type="entry name" value="Isopropylmalate Dehydrogenase"/>
    <property type="match status" value="1"/>
</dbReference>
<dbReference type="HAMAP" id="MF_01035">
    <property type="entry name" value="LeuB_type2"/>
    <property type="match status" value="1"/>
</dbReference>
<dbReference type="InterPro" id="IPR050501">
    <property type="entry name" value="ICDH/IPMDH"/>
</dbReference>
<dbReference type="InterPro" id="IPR019818">
    <property type="entry name" value="IsoCit/isopropylmalate_DH_CS"/>
</dbReference>
<dbReference type="InterPro" id="IPR024084">
    <property type="entry name" value="IsoPropMal-DH-like_dom"/>
</dbReference>
<dbReference type="InterPro" id="IPR023698">
    <property type="entry name" value="LeuB_actb"/>
</dbReference>
<dbReference type="NCBIfam" id="NF002898">
    <property type="entry name" value="PRK03437.1"/>
    <property type="match status" value="1"/>
</dbReference>
<dbReference type="PANTHER" id="PTHR43275">
    <property type="entry name" value="D-MALATE DEHYDROGENASE [DECARBOXYLATING]"/>
    <property type="match status" value="1"/>
</dbReference>
<dbReference type="PANTHER" id="PTHR43275:SF1">
    <property type="entry name" value="D-MALATE DEHYDROGENASE [DECARBOXYLATING]"/>
    <property type="match status" value="1"/>
</dbReference>
<dbReference type="Pfam" id="PF00180">
    <property type="entry name" value="Iso_dh"/>
    <property type="match status" value="1"/>
</dbReference>
<dbReference type="SMART" id="SM01329">
    <property type="entry name" value="Iso_dh"/>
    <property type="match status" value="1"/>
</dbReference>
<dbReference type="SUPFAM" id="SSF53659">
    <property type="entry name" value="Isocitrate/Isopropylmalate dehydrogenase-like"/>
    <property type="match status" value="1"/>
</dbReference>
<dbReference type="PROSITE" id="PS00470">
    <property type="entry name" value="IDH_IMDH"/>
    <property type="match status" value="1"/>
</dbReference>
<evidence type="ECO:0000255" key="1">
    <source>
        <dbReference type="HAMAP-Rule" id="MF_01035"/>
    </source>
</evidence>